<feature type="chain" id="PRO_0000329269" description="Phosphate acyltransferase">
    <location>
        <begin position="1"/>
        <end position="335"/>
    </location>
</feature>
<comment type="function">
    <text evidence="1">Catalyzes the reversible formation of acyl-phosphate (acyl-PO(4)) from acyl-[acyl-carrier-protein] (acyl-ACP). This enzyme utilizes acyl-ACP as fatty acyl donor, but not acyl-CoA.</text>
</comment>
<comment type="catalytic activity">
    <reaction evidence="1">
        <text>a fatty acyl-[ACP] + phosphate = an acyl phosphate + holo-[ACP]</text>
        <dbReference type="Rhea" id="RHEA:42292"/>
        <dbReference type="Rhea" id="RHEA-COMP:9685"/>
        <dbReference type="Rhea" id="RHEA-COMP:14125"/>
        <dbReference type="ChEBI" id="CHEBI:43474"/>
        <dbReference type="ChEBI" id="CHEBI:59918"/>
        <dbReference type="ChEBI" id="CHEBI:64479"/>
        <dbReference type="ChEBI" id="CHEBI:138651"/>
        <dbReference type="EC" id="2.3.1.274"/>
    </reaction>
</comment>
<comment type="pathway">
    <text evidence="1">Lipid metabolism; phospholipid metabolism.</text>
</comment>
<comment type="subunit">
    <text evidence="1">Homodimer. Probably interacts with PlsY.</text>
</comment>
<comment type="subcellular location">
    <subcellularLocation>
        <location evidence="1">Cytoplasm</location>
    </subcellularLocation>
    <text evidence="1">Associated with the membrane possibly through PlsY.</text>
</comment>
<comment type="similarity">
    <text evidence="1">Belongs to the PlsX family.</text>
</comment>
<comment type="sequence caution" evidence="2">
    <conflict type="erroneous initiation">
        <sequence resource="EMBL-CDS" id="ABF31208"/>
    </conflict>
</comment>
<dbReference type="EC" id="2.3.1.274" evidence="1"/>
<dbReference type="EMBL" id="CP000259">
    <property type="protein sequence ID" value="ABF31208.1"/>
    <property type="status" value="ALT_INIT"/>
    <property type="molecule type" value="Genomic_DNA"/>
</dbReference>
<dbReference type="RefSeq" id="WP_002987696.1">
    <property type="nucleotide sequence ID" value="NC_008021.1"/>
</dbReference>
<dbReference type="SMR" id="Q1JP41"/>
<dbReference type="KEGG" id="spk:MGAS9429_Spy0020"/>
<dbReference type="HOGENOM" id="CLU_039379_1_1_9"/>
<dbReference type="UniPathway" id="UPA00085"/>
<dbReference type="Proteomes" id="UP000002433">
    <property type="component" value="Chromosome"/>
</dbReference>
<dbReference type="GO" id="GO:0005737">
    <property type="term" value="C:cytoplasm"/>
    <property type="evidence" value="ECO:0007669"/>
    <property type="project" value="UniProtKB-SubCell"/>
</dbReference>
<dbReference type="GO" id="GO:0043811">
    <property type="term" value="F:phosphate:acyl-[acyl carrier protein] acyltransferase activity"/>
    <property type="evidence" value="ECO:0007669"/>
    <property type="project" value="UniProtKB-UniRule"/>
</dbReference>
<dbReference type="GO" id="GO:0006633">
    <property type="term" value="P:fatty acid biosynthetic process"/>
    <property type="evidence" value="ECO:0007669"/>
    <property type="project" value="UniProtKB-UniRule"/>
</dbReference>
<dbReference type="GO" id="GO:0008654">
    <property type="term" value="P:phospholipid biosynthetic process"/>
    <property type="evidence" value="ECO:0007669"/>
    <property type="project" value="UniProtKB-KW"/>
</dbReference>
<dbReference type="Gene3D" id="3.40.718.10">
    <property type="entry name" value="Isopropylmalate Dehydrogenase"/>
    <property type="match status" value="1"/>
</dbReference>
<dbReference type="HAMAP" id="MF_00019">
    <property type="entry name" value="PlsX"/>
    <property type="match status" value="1"/>
</dbReference>
<dbReference type="InterPro" id="IPR003664">
    <property type="entry name" value="FA_synthesis"/>
</dbReference>
<dbReference type="InterPro" id="IPR012281">
    <property type="entry name" value="Phospholipid_synth_PlsX-like"/>
</dbReference>
<dbReference type="NCBIfam" id="TIGR00182">
    <property type="entry name" value="plsX"/>
    <property type="match status" value="1"/>
</dbReference>
<dbReference type="PANTHER" id="PTHR30100">
    <property type="entry name" value="FATTY ACID/PHOSPHOLIPID SYNTHESIS PROTEIN PLSX"/>
    <property type="match status" value="1"/>
</dbReference>
<dbReference type="PANTHER" id="PTHR30100:SF1">
    <property type="entry name" value="PHOSPHATE ACYLTRANSFERASE"/>
    <property type="match status" value="1"/>
</dbReference>
<dbReference type="Pfam" id="PF02504">
    <property type="entry name" value="FA_synthesis"/>
    <property type="match status" value="1"/>
</dbReference>
<dbReference type="PIRSF" id="PIRSF002465">
    <property type="entry name" value="Phsphlp_syn_PlsX"/>
    <property type="match status" value="1"/>
</dbReference>
<dbReference type="SUPFAM" id="SSF53659">
    <property type="entry name" value="Isocitrate/Isopropylmalate dehydrogenase-like"/>
    <property type="match status" value="1"/>
</dbReference>
<organism>
    <name type="scientific">Streptococcus pyogenes serotype M12 (strain MGAS9429)</name>
    <dbReference type="NCBI Taxonomy" id="370551"/>
    <lineage>
        <taxon>Bacteria</taxon>
        <taxon>Bacillati</taxon>
        <taxon>Bacillota</taxon>
        <taxon>Bacilli</taxon>
        <taxon>Lactobacillales</taxon>
        <taxon>Streptococcaceae</taxon>
        <taxon>Streptococcus</taxon>
    </lineage>
</organism>
<reference key="1">
    <citation type="journal article" date="2006" name="Proc. Natl. Acad. Sci. U.S.A.">
        <title>Molecular genetic anatomy of inter- and intraserotype variation in the human bacterial pathogen group A Streptococcus.</title>
        <authorList>
            <person name="Beres S.B."/>
            <person name="Richter E.W."/>
            <person name="Nagiec M.J."/>
            <person name="Sumby P."/>
            <person name="Porcella S.F."/>
            <person name="DeLeo F.R."/>
            <person name="Musser J.M."/>
        </authorList>
    </citation>
    <scope>NUCLEOTIDE SEQUENCE [LARGE SCALE GENOMIC DNA]</scope>
    <source>
        <strain>MGAS9429</strain>
    </source>
</reference>
<name>PLSX_STRPC</name>
<proteinExistence type="inferred from homology"/>
<gene>
    <name evidence="1" type="primary">plsX</name>
    <name type="ordered locus">MGAS9429_Spy0020</name>
</gene>
<sequence>MKRIAIDAMGGDNAPKAIVEGVNQAIEAFSDIEIQLYGDQTKINSYLIQSDRVAIIHTDEKIMSDDEPAKAVRRKKKASMVLAAKAVKEGKADAIISAGNTGALLAVGLFVVGRIKGVDRPGLLSTIPTVTGLGFDMLDLGANAENTAKHLHQYAILGSFYAKNVRGIANPRVGLLNNGTEETKGDPLRKATYELLTADNTISFVGNVEARELMSGVADVIVSDGFTGNAVLKSIEGTAISIMGQLKQIINSGGIKTKIGASLLKSSLYEMKKTLDYSSAGGAVLFGLKAPVVKSHGSSDVKAIFSTIKQVRTMLDTNVVGQLVEEFAKETQVND</sequence>
<evidence type="ECO:0000255" key="1">
    <source>
        <dbReference type="HAMAP-Rule" id="MF_00019"/>
    </source>
</evidence>
<evidence type="ECO:0000305" key="2"/>
<keyword id="KW-0963">Cytoplasm</keyword>
<keyword id="KW-0444">Lipid biosynthesis</keyword>
<keyword id="KW-0443">Lipid metabolism</keyword>
<keyword id="KW-0594">Phospholipid biosynthesis</keyword>
<keyword id="KW-1208">Phospholipid metabolism</keyword>
<keyword id="KW-0808">Transferase</keyword>
<accession>Q1JP41</accession>
<protein>
    <recommendedName>
        <fullName evidence="1">Phosphate acyltransferase</fullName>
        <ecNumber evidence="1">2.3.1.274</ecNumber>
    </recommendedName>
    <alternativeName>
        <fullName evidence="1">Acyl-ACP phosphotransacylase</fullName>
    </alternativeName>
    <alternativeName>
        <fullName evidence="1">Acyl-[acyl-carrier-protein]--phosphate acyltransferase</fullName>
    </alternativeName>
    <alternativeName>
        <fullName evidence="1">Phosphate-acyl-ACP acyltransferase</fullName>
    </alternativeName>
</protein>